<comment type="function">
    <text evidence="4 5 6 7 8 9 10 11 13 14 15 16 17">Cellular antisilencing factor and regulator of genome DNA methylation patterns involved in the regulation of chromatin states (PubMed:32925902). Together with SUVH4, monitors repressive epigenetic marks H3K27me1, H3K9me2, and prevents DNA-methylation at CHG sites, affecting especially the expression of transposons and developmentally important genes (PubMed:21830950, PubMed:23609044, PubMed:24248388). Collaboratively with ASI1 and AIPP1/EDM3, the AAE complex regulates alternative RNA processing (e.g. alternative splicing) and epigenetic silencing (e.g. H3K9me2) of intronic heterochromatin-containing genes as well as genic heterochromatin-containing genes by promoting distal 3' polyadenylation (PubMed:24248388, PubMed:28808009, PubMed:33438356). Epigenetic reader that binds DNA and contributes to transcriptional transposable element (TE) silencing by modulating levels of the repressive post-translational histone modifications (PHM) H3K9me2 (PubMed:23609044, PubMed:28808009, PubMed:32925902, PubMed:33438356). In cv. Columbia, required for RPP7-dependent disease resistance against the Hyaloperonospora arabidopsidis isolate Hiks1, by promoting levels of RPP7 via alternative polyadenylation (APA), resulting from cooption of epigenetic information at the TE insertion locus COPIA-R7 (PubMed:17253987, PubMed:20149132, PubMed:23940361, PubMed:30407670). Exhibits a global role in NLR (nucleotide-binding, leucine-rich repeat) defense genes epigenetic (e.g. H3K9me2 hallmarks) expression control; promotes the accumulation of RPP7, RPP4 and some other proteins, but mediates the repression of several other NLR products, probably to compensate for fitness penalties caused by defense mechanisms (PubMed:32925902). Regulates development processes such as the formation of leaf pavement cells, leaf expansion, fertility and flowering (PubMed:20149132, PubMed:20840782, PubMed:23609044). Prevents FLC accumulation to control flowering (PubMed:23976921). Modulates stomatal development by regulating the methylation-mediated silencing of ERECTA receptor genes (e.g. ER, ERL1 and ERL2) and preventing cell divisions (PubMed:27697902).</text>
</comment>
<comment type="subunit">
    <text evidence="5 7 14 15">Interacts with WNK8 in nucleus; this interaction is involved in developmental processes regulation but not in RPP7-dependent disease resistance (PubMed:20149132). Interacts with EML1 and EML2 in nucleus (PubMed:21830950). Component of the ASI1-AIPP1-EDM2 (AAE) RNA regulatory complex composed of at least AIPP1/EDM3, ASI1 and EDM2 and may contain CPL2, AIPP2 and AIPP3/BDT1 (PubMed:28808009). Binds directly to AIPP1/EDM3 (PubMed:28808009). Co-associates with AIPP1/EDM3 to histone H3 lysine 9 dimethylation (H3K9me2)-marked chromatin and transcripts at a critical proximal polyadenylation site of RPP7 to hamper proximal transcript polyadeylation/termination (PubMed:30407670).</text>
</comment>
<comment type="subcellular location">
    <subcellularLocation>
        <location evidence="2 5 7">Nucleus</location>
    </subcellularLocation>
</comment>
<comment type="domain">
    <text evidence="11 12">The PHD domains recognize both active and repressive histone methylation marks at the intronic repeat elements in genes.</text>
</comment>
<comment type="PTM">
    <text evidence="5">Phosphorylated by WNK8.</text>
</comment>
<comment type="disruption phenotype">
    <text evidence="4 5 6 8 9 10 11 13 14 15 16">Impeded use of distal polyadenylation sites at intronic heterochromatin (HC)-containing genes (e.g. histone demethylase gene IBM1) resulting in a lack of functional full-length transcripts (PubMed:28808009). Abolished expression of At4g16870, a transposable element (TE) of Copia-like retrotransposon origin, associated with methylated status (PubMed:28808009). Strong reduction in RPP7 levels due to altered H3K9me2 levels in COPIA-R7 (PubMed:17253987, PubMed:23940361). Disturbed expression pattern of NLR (nucleotide-binding, leucine-rich repeat) defense genes due to abnormal H3K9me2 hallmarks; some being repressed, including RPP7 and RPP4, but many being induced (PubMed:32925902). Compromised RPP7-dependent immunity leading to an increased sporulation of the incompatible Hyaloperonospora arabidopsidis (downy mildew) Hpa-Hiks1 isolate, but normal resistance to Hpa-Cala2 and Hpa-Cand5 isolates in cv. Col-5 background; full susceptibility to these isolates is observed in cv. Wassilewskija background (PubMed:17253987, PubMed:30407670). Abnormal leaf development and flowering time (PubMed:20149132, PubMed:20840782). Enhanced accumulation of FLC (PubMed:23976921). Altered silencing states of several transposons associated with reduced histone methylation at H3K27me1 and H3K9me2 (PubMed:23609044, PubMed:32925902). Hypermethylation of DNA at CHG sites (PubMed:24248388). Reduced fertility (PubMed:23609044). Overproduction of stomatal lineage cells due to increased cell divisions and associated with DNA hypermethylation and silencing of ERECTA receptor genes such as ER, ERL1 and ERL2 (PubMed:27697902).</text>
</comment>
<comment type="sequence caution" evidence="19">
    <conflict type="erroneous gene model prediction">
        <sequence resource="EMBL-CDS" id="BAB08556"/>
    </conflict>
</comment>
<reference key="1">
    <citation type="journal article" date="2013" name="Proc. Natl. Acad. Sci. U.S.A.">
        <title>An alternative polyadenylation mechanism coopted to the Arabidopsis RPP7 gene through intronic retrotransposon domestication.</title>
        <authorList>
            <person name="Tsuchiya T."/>
            <person name="Eulgem T."/>
        </authorList>
    </citation>
    <scope>NUCLEOTIDE SEQUENCE [MRNA]</scope>
    <scope>FUNCTION</scope>
    <scope>DEVELOPMENTAL STAGE</scope>
    <source>
        <strain>cv. Columbia</strain>
        <strain>cv. Koch-1</strain>
    </source>
</reference>
<reference key="2">
    <citation type="journal article" date="1998" name="DNA Res.">
        <title>Structural analysis of Arabidopsis thaliana chromosome 5. VII. Sequence features of the regions of 1,013,767 bp covered by sixteen physically assigned P1 and TAC clones.</title>
        <authorList>
            <person name="Nakamura Y."/>
            <person name="Sato S."/>
            <person name="Asamizu E."/>
            <person name="Kaneko T."/>
            <person name="Kotani H."/>
            <person name="Miyajima N."/>
            <person name="Tabata S."/>
        </authorList>
    </citation>
    <scope>NUCLEOTIDE SEQUENCE [LARGE SCALE GENOMIC DNA]</scope>
    <source>
        <strain>cv. Columbia</strain>
    </source>
</reference>
<reference key="3">
    <citation type="journal article" date="2017" name="Plant J.">
        <title>Araport11: a complete reannotation of the Arabidopsis thaliana reference genome.</title>
        <authorList>
            <person name="Cheng C.Y."/>
            <person name="Krishnakumar V."/>
            <person name="Chan A.P."/>
            <person name="Thibaud-Nissen F."/>
            <person name="Schobel S."/>
            <person name="Town C.D."/>
        </authorList>
    </citation>
    <scope>GENOME REANNOTATION</scope>
    <source>
        <strain>cv. Columbia</strain>
    </source>
</reference>
<reference key="4">
    <citation type="journal article" date="2007" name="Plant J.">
        <title>EDM2 is required for RPP7-dependent disease resistance in Arabidopsis and affects RPP7 transcript levels.</title>
        <authorList>
            <person name="Eulgem T."/>
            <person name="Tsuchiya T."/>
            <person name="Wang X.-J."/>
            <person name="Beasley B."/>
            <person name="Cuzick A."/>
            <person name="Toer M."/>
            <person name="Zhu T."/>
            <person name="McDowell J.M."/>
            <person name="Holub E."/>
            <person name="Dangl J.L."/>
        </authorList>
    </citation>
    <scope>FUNCTION</scope>
    <scope>DISRUPTION PHENOTYPE</scope>
    <source>
        <strain>cv. Columbia</strain>
    </source>
</reference>
<reference key="5">
    <citation type="journal article" date="2010" name="BMC Plant Biol.">
        <title>Co-option of EDM2 to distinct regulatory modules in Arabidopsis thaliana development.</title>
        <authorList>
            <person name="Tsuchiya T."/>
            <person name="Eulgem T."/>
        </authorList>
    </citation>
    <scope>FUNCTION</scope>
    <scope>DISRUPTION PHENOTYPE</scope>
    <source>
        <strain>cv. Columbia</strain>
    </source>
</reference>
<reference key="6">
    <citation type="journal article" date="2010" name="Plant J.">
        <title>The Arabidopsis defense component EDM2 affects the floral transition in an FLC-dependent manner.</title>
        <authorList>
            <person name="Tsuchiya T."/>
            <person name="Eulgem T."/>
        </authorList>
    </citation>
    <scope>FUNCTION</scope>
    <scope>SUBCELLULAR LOCATION</scope>
    <scope>INTERACTION WITH WNK8</scope>
    <scope>PHOSPHORYLATION BY WNK8</scope>
    <source>
        <strain>cv. Columbia</strain>
    </source>
</reference>
<reference key="7">
    <citation type="journal article" date="2011" name="Mol. Plant Microbe Interact.">
        <title>EMSY-like genes are required for full RPP7-mediated race-specific immunity and basal defense in Arabidopsis.</title>
        <authorList>
            <person name="Tsuchiya T."/>
            <person name="Eulgem T."/>
        </authorList>
    </citation>
    <scope>INTERACTION WITH EML1 AND EML2</scope>
    <scope>SUBCELLULAR LOCATION</scope>
    <scope>FUNCTION</scope>
</reference>
<reference key="8">
    <citation type="journal article" date="2013" name="PLoS ONE">
        <title>Antagonistic regulation of flowering time through distinct regulatory subunits of protein phosphatase 2A.</title>
        <authorList>
            <person name="Heidari B."/>
            <person name="Nemie-Feyissa D."/>
            <person name="Kangasjarvi S."/>
            <person name="Lillo C."/>
        </authorList>
    </citation>
    <scope>FUNCTION</scope>
    <scope>DISRUPTION PHENOTYPE</scope>
</reference>
<reference key="9">
    <citation type="journal article" date="2013" name="Sci. Rep.">
        <title>Mutations in EDM2 selectively affect silencing states of transposons and induce plant developmental plasticity.</title>
        <authorList>
            <person name="Tsuchiya T."/>
            <person name="Eulgem T."/>
        </authorList>
    </citation>
    <scope>FUNCTION</scope>
    <scope>DISRUPTION PHENOTYPE</scope>
    <source>
        <strain>cv. Columbia</strain>
    </source>
</reference>
<reference key="10">
    <citation type="journal article" date="2014" name="Plant Signal. Behav.">
        <title>The PHD-finger module of the Arabidopsis thaliana defense regulator EDM2 can recognize triply modified histone H3 peptides.</title>
        <authorList>
            <person name="Tsuchiya T."/>
            <person name="Eulgem T."/>
        </authorList>
    </citation>
    <scope>DOMAIN PHD</scope>
</reference>
<reference key="11">
    <citation type="journal article" date="2014" name="Proc. Natl. Acad. Sci. U.S.A.">
        <title>Arabidopsis EDM2 promotes IBM1 distal polyadenylation and regulates genome DNA methylation patterns.</title>
        <authorList>
            <person name="Lei M."/>
            <person name="La H."/>
            <person name="Lu K."/>
            <person name="Wang P."/>
            <person name="Miki D."/>
            <person name="Ren Z."/>
            <person name="Duan C.-G."/>
            <person name="Wang X."/>
            <person name="Tang K."/>
            <person name="Zeng L."/>
            <person name="Yang L."/>
            <person name="Zhang H."/>
            <person name="Nie W."/>
            <person name="Liu P."/>
            <person name="Zhou J."/>
            <person name="Liu R."/>
            <person name="Zhong Y."/>
            <person name="Liu D."/>
            <person name="Zhu J.K."/>
        </authorList>
    </citation>
    <scope>FUNCTION</scope>
    <scope>DISRUPTION PHENOTYPE</scope>
    <scope>DOMAIN PHD</scope>
    <source>
        <strain>cv. Columbia</strain>
    </source>
</reference>
<reference key="12">
    <citation type="journal article" date="2016" name="Development">
        <title>Demethylation of ERECTA receptor genes by IBM1 histone demethylase affects stomatal development.</title>
        <authorList>
            <person name="Wang Y."/>
            <person name="Xue X."/>
            <person name="Zhu J.-K."/>
            <person name="Dong J."/>
        </authorList>
    </citation>
    <scope>FUNCTION</scope>
    <scope>DISRUPTION PHENOTYPE</scope>
    <source>
        <strain>cv. Columbia</strain>
    </source>
</reference>
<reference key="13">
    <citation type="journal article" date="2017" name="Proc. Natl. Acad. Sci. U.S.A.">
        <title>A protein complex regulates RNA processing of intronic heterochromatin-containing genes in Arabidopsis.</title>
        <authorList>
            <person name="Duan C.-G."/>
            <person name="Wang X."/>
            <person name="Zhang L."/>
            <person name="Xiong X."/>
            <person name="Zhang Z."/>
            <person name="Tang K."/>
            <person name="Pan L."/>
            <person name="Hsu C.-C."/>
            <person name="Xu H."/>
            <person name="Tao W.A."/>
            <person name="Zhang H."/>
            <person name="Zhu J.-K."/>
        </authorList>
    </citation>
    <scope>FUNCTION</scope>
    <scope>DISRUPTION PHENOTYPE</scope>
    <scope>SUBUNIT</scope>
    <scope>INTERACTION WITH AIPP1/EDM3</scope>
    <source>
        <strain>cv. Columbia</strain>
    </source>
</reference>
<reference key="14">
    <citation type="journal article" date="2019" name="Plant J.">
        <title>The Arabidopsis RRM domain protein EDM3 mediates race-specific disease resistance by controlling H3K9me2-dependent alternative polyadenylation of RPP7 immune receptor transcripts.</title>
        <authorList>
            <person name="Lai Y."/>
            <person name="Cuzick A."/>
            <person name="Lu X.M."/>
            <person name="Wang J."/>
            <person name="Katiyar N."/>
            <person name="Tsuchiya T."/>
            <person name="Le Roch K."/>
            <person name="McDowell J.M."/>
            <person name="Holub E."/>
            <person name="Eulgem T."/>
        </authorList>
    </citation>
    <scope>FUNCTION</scope>
    <scope>DISRUPTION PHENOTYPE</scope>
    <scope>SUBUNIT</scope>
    <source>
        <strain>cv. Col-5</strain>
        <strain>cv. Wassilewskija</strain>
    </source>
</reference>
<reference key="15">
    <citation type="journal article" date="2020" name="PLoS Genet.">
        <title>The Arabidopsis PHD-finger protein EDM2 has multiple roles in balancing NLR immune receptor gene expression.</title>
        <authorList>
            <person name="Lai Y."/>
            <person name="Lu X.M."/>
            <person name="Daron J."/>
            <person name="Pan S."/>
            <person name="Wang J."/>
            <person name="Wang W."/>
            <person name="Tsuchiya T."/>
            <person name="Holub E."/>
            <person name="McDowell J.M."/>
            <person name="Slotkin R.K."/>
            <person name="Le Roch K.G."/>
            <person name="Eulgem T."/>
        </authorList>
    </citation>
    <scope>FUNCTION</scope>
    <scope>DISRUPTION PHENOTYPE</scope>
    <source>
        <strain>cv. Columbia</strain>
    </source>
</reference>
<reference key="16">
    <citation type="journal article" date="2021" name="J. Integr. Plant Biol.">
        <title>Genome-wide distribution and functions of the AAE complex in epigenetic regulation in Arabidopsis.</title>
        <authorList>
            <person name="Zhang Y.-Z."/>
            <person name="Lin J."/>
            <person name="Ren Z."/>
            <person name="Chen C.-X."/>
            <person name="Miki D."/>
            <person name="Xie S.-S."/>
            <person name="Zhang J."/>
            <person name="Chang Y.-N."/>
            <person name="Jiang J."/>
            <person name="Yan J."/>
            <person name="Li Q.Q."/>
            <person name="Zhu J.-K."/>
            <person name="Duan C.-G."/>
        </authorList>
    </citation>
    <scope>FUNCTION</scope>
    <source>
        <strain>cv. Columbia</strain>
    </source>
</reference>
<gene>
    <name evidence="18" type="primary">EDM2</name>
    <name evidence="20" type="ordered locus">At5g55390</name>
    <name evidence="21" type="ORF">MTE17.10</name>
</gene>
<dbReference type="EMBL" id="KF112069">
    <property type="protein sequence ID" value="AGT37273.1"/>
    <property type="molecule type" value="mRNA"/>
</dbReference>
<dbReference type="EMBL" id="AB015479">
    <property type="protein sequence ID" value="BAB08556.1"/>
    <property type="status" value="ALT_SEQ"/>
    <property type="molecule type" value="Genomic_DNA"/>
</dbReference>
<dbReference type="EMBL" id="CP002688">
    <property type="protein sequence ID" value="AED96623.1"/>
    <property type="molecule type" value="Genomic_DNA"/>
</dbReference>
<dbReference type="EMBL" id="CP002688">
    <property type="protein sequence ID" value="AED96624.1"/>
    <property type="molecule type" value="Genomic_DNA"/>
</dbReference>
<dbReference type="EMBL" id="CP002688">
    <property type="protein sequence ID" value="ANM70552.1"/>
    <property type="molecule type" value="Genomic_DNA"/>
</dbReference>
<dbReference type="RefSeq" id="NP_001190545.1">
    <property type="nucleotide sequence ID" value="NM_001203616.2"/>
</dbReference>
<dbReference type="RefSeq" id="NP_001332152.1">
    <property type="nucleotide sequence ID" value="NM_001345123.1"/>
</dbReference>
<dbReference type="RefSeq" id="NP_200350.2">
    <property type="nucleotide sequence ID" value="NM_124921.5"/>
</dbReference>
<dbReference type="FunCoup" id="F4K3G5">
    <property type="interactions" value="1781"/>
</dbReference>
<dbReference type="IntAct" id="F4K3G5">
    <property type="interactions" value="1"/>
</dbReference>
<dbReference type="STRING" id="3702.F4K3G5"/>
<dbReference type="iPTMnet" id="F4K3G5"/>
<dbReference type="PaxDb" id="3702-AT5G55390.1"/>
<dbReference type="ProteomicsDB" id="247064"/>
<dbReference type="EnsemblPlants" id="AT5G55390.1">
    <property type="protein sequence ID" value="AT5G55390.1"/>
    <property type="gene ID" value="AT5G55390"/>
</dbReference>
<dbReference type="EnsemblPlants" id="AT5G55390.2">
    <property type="protein sequence ID" value="AT5G55390.2"/>
    <property type="gene ID" value="AT5G55390"/>
</dbReference>
<dbReference type="EnsemblPlants" id="AT5G55390.3">
    <property type="protein sequence ID" value="AT5G55390.3"/>
    <property type="gene ID" value="AT5G55390"/>
</dbReference>
<dbReference type="GeneID" id="835632"/>
<dbReference type="Gramene" id="AT5G55390.1">
    <property type="protein sequence ID" value="AT5G55390.1"/>
    <property type="gene ID" value="AT5G55390"/>
</dbReference>
<dbReference type="Gramene" id="AT5G55390.2">
    <property type="protein sequence ID" value="AT5G55390.2"/>
    <property type="gene ID" value="AT5G55390"/>
</dbReference>
<dbReference type="Gramene" id="AT5G55390.3">
    <property type="protein sequence ID" value="AT5G55390.3"/>
    <property type="gene ID" value="AT5G55390"/>
</dbReference>
<dbReference type="KEGG" id="ath:AT5G55390"/>
<dbReference type="Araport" id="AT5G55390"/>
<dbReference type="TAIR" id="AT5G55390">
    <property type="gene designation" value="EDM2"/>
</dbReference>
<dbReference type="eggNOG" id="ENOG502QPIX">
    <property type="taxonomic scope" value="Eukaryota"/>
</dbReference>
<dbReference type="HOGENOM" id="CLU_003552_2_0_1"/>
<dbReference type="InParanoid" id="F4K3G5"/>
<dbReference type="OMA" id="NIWIKLE"/>
<dbReference type="PRO" id="PR:F4K3G5"/>
<dbReference type="Proteomes" id="UP000006548">
    <property type="component" value="Chromosome 5"/>
</dbReference>
<dbReference type="ExpressionAtlas" id="F4K3G5">
    <property type="expression patterns" value="baseline and differential"/>
</dbReference>
<dbReference type="GO" id="GO:0000792">
    <property type="term" value="C:heterochromatin"/>
    <property type="evidence" value="ECO:0000315"/>
    <property type="project" value="UniProtKB"/>
</dbReference>
<dbReference type="GO" id="GO:0005634">
    <property type="term" value="C:nucleus"/>
    <property type="evidence" value="ECO:0000314"/>
    <property type="project" value="TAIR"/>
</dbReference>
<dbReference type="GO" id="GO:0032991">
    <property type="term" value="C:protein-containing complex"/>
    <property type="evidence" value="ECO:0000353"/>
    <property type="project" value="TAIR"/>
</dbReference>
<dbReference type="GO" id="GO:0003700">
    <property type="term" value="F:DNA-binding transcription factor activity"/>
    <property type="evidence" value="ECO:0000250"/>
    <property type="project" value="TAIR"/>
</dbReference>
<dbReference type="GO" id="GO:0062072">
    <property type="term" value="F:histone H3K9me2/3 reader activity"/>
    <property type="evidence" value="ECO:0000314"/>
    <property type="project" value="GO_Central"/>
</dbReference>
<dbReference type="GO" id="GO:0140566">
    <property type="term" value="F:histone reader activity"/>
    <property type="evidence" value="ECO:0000315"/>
    <property type="project" value="UniProtKB"/>
</dbReference>
<dbReference type="GO" id="GO:0043565">
    <property type="term" value="F:sequence-specific DNA binding"/>
    <property type="evidence" value="ECO:0000314"/>
    <property type="project" value="UniProtKB"/>
</dbReference>
<dbReference type="GO" id="GO:0008270">
    <property type="term" value="F:zinc ion binding"/>
    <property type="evidence" value="ECO:0007669"/>
    <property type="project" value="UniProtKB-KW"/>
</dbReference>
<dbReference type="GO" id="GO:0050832">
    <property type="term" value="P:defense response to fungus"/>
    <property type="evidence" value="ECO:0000315"/>
    <property type="project" value="TAIR"/>
</dbReference>
<dbReference type="GO" id="GO:0040029">
    <property type="term" value="P:epigenetic regulation of gene expression"/>
    <property type="evidence" value="ECO:0000314"/>
    <property type="project" value="UniProtKB"/>
</dbReference>
<dbReference type="GO" id="GO:0090436">
    <property type="term" value="P:leaf pavement cell development"/>
    <property type="evidence" value="ECO:0000315"/>
    <property type="project" value="UniProtKB"/>
</dbReference>
<dbReference type="GO" id="GO:0031452">
    <property type="term" value="P:negative regulation of heterochromatin formation"/>
    <property type="evidence" value="ECO:0000315"/>
    <property type="project" value="UniProtKB"/>
</dbReference>
<dbReference type="GO" id="GO:1902290">
    <property type="term" value="P:positive regulation of defense response to oomycetes"/>
    <property type="evidence" value="ECO:0000315"/>
    <property type="project" value="UniProtKB"/>
</dbReference>
<dbReference type="GO" id="GO:0009911">
    <property type="term" value="P:positive regulation of flower development"/>
    <property type="evidence" value="ECO:0000315"/>
    <property type="project" value="UniProtKB"/>
</dbReference>
<dbReference type="GO" id="GO:0031347">
    <property type="term" value="P:regulation of defense response"/>
    <property type="evidence" value="ECO:0000315"/>
    <property type="project" value="UniProtKB"/>
</dbReference>
<dbReference type="GO" id="GO:0006355">
    <property type="term" value="P:regulation of DNA-templated transcription"/>
    <property type="evidence" value="ECO:0000315"/>
    <property type="project" value="UniProtKB"/>
</dbReference>
<dbReference type="GO" id="GO:2000024">
    <property type="term" value="P:regulation of leaf development"/>
    <property type="evidence" value="ECO:0000315"/>
    <property type="project" value="UniProtKB"/>
</dbReference>
<dbReference type="GO" id="GO:0060147">
    <property type="term" value="P:regulation of post-transcriptional gene silencing"/>
    <property type="evidence" value="ECO:0000315"/>
    <property type="project" value="UniProtKB"/>
</dbReference>
<dbReference type="GO" id="GO:0007165">
    <property type="term" value="P:signal transduction"/>
    <property type="evidence" value="ECO:0000315"/>
    <property type="project" value="TAIR"/>
</dbReference>
<dbReference type="GO" id="GO:0010440">
    <property type="term" value="P:stomatal lineage progression"/>
    <property type="evidence" value="ECO:0000315"/>
    <property type="project" value="UniProtKB"/>
</dbReference>
<dbReference type="GO" id="GO:0141005">
    <property type="term" value="P:transposable element silencing by heterochromatin formation"/>
    <property type="evidence" value="ECO:0000314"/>
    <property type="project" value="UniProtKB"/>
</dbReference>
<dbReference type="GO" id="GO:0010228">
    <property type="term" value="P:vegetative to reproductive phase transition of meristem"/>
    <property type="evidence" value="ECO:0000315"/>
    <property type="project" value="UniProtKB"/>
</dbReference>
<dbReference type="CDD" id="cd15565">
    <property type="entry name" value="PHD2_NSD"/>
    <property type="match status" value="1"/>
</dbReference>
<dbReference type="CDD" id="cd15566">
    <property type="entry name" value="PHD3_NSD"/>
    <property type="match status" value="1"/>
</dbReference>
<dbReference type="Gene3D" id="3.30.40.10">
    <property type="entry name" value="Zinc/RING finger domain, C3HC4 (zinc finger)"/>
    <property type="match status" value="2"/>
</dbReference>
<dbReference type="InterPro" id="IPR022702">
    <property type="entry name" value="Cytosine_MeTrfase1_RFD"/>
</dbReference>
<dbReference type="InterPro" id="IPR055198">
    <property type="entry name" value="NSD_PHD"/>
</dbReference>
<dbReference type="InterPro" id="IPR055197">
    <property type="entry name" value="PHDvar_NSD"/>
</dbReference>
<dbReference type="InterPro" id="IPR001965">
    <property type="entry name" value="Znf_PHD"/>
</dbReference>
<dbReference type="InterPro" id="IPR013083">
    <property type="entry name" value="Znf_RING/FYVE/PHD"/>
</dbReference>
<dbReference type="PANTHER" id="PTHR46235">
    <property type="entry name" value="PHD FINGER-CONTAINING PROTEIN DDB_G0268158"/>
    <property type="match status" value="1"/>
</dbReference>
<dbReference type="PANTHER" id="PTHR46235:SF3">
    <property type="entry name" value="PHD FINGER-CONTAINING PROTEIN DDB_G0268158"/>
    <property type="match status" value="1"/>
</dbReference>
<dbReference type="Pfam" id="PF12047">
    <property type="entry name" value="DNMT1-RFD"/>
    <property type="match status" value="1"/>
</dbReference>
<dbReference type="Pfam" id="PF22908">
    <property type="entry name" value="PHD_NSD"/>
    <property type="match status" value="1"/>
</dbReference>
<dbReference type="Pfam" id="PF23004">
    <property type="entry name" value="PHDvar_NSD"/>
    <property type="match status" value="1"/>
</dbReference>
<dbReference type="SMART" id="SM00249">
    <property type="entry name" value="PHD"/>
    <property type="match status" value="3"/>
</dbReference>
<name>EDM2_ARATH</name>
<keyword id="KW-0156">Chromatin regulator</keyword>
<keyword id="KW-0217">Developmental protein</keyword>
<keyword id="KW-0238">DNA-binding</keyword>
<keyword id="KW-0479">Metal-binding</keyword>
<keyword id="KW-0539">Nucleus</keyword>
<keyword id="KW-0597">Phosphoprotein</keyword>
<keyword id="KW-0611">Plant defense</keyword>
<keyword id="KW-1185">Reference proteome</keyword>
<keyword id="KW-0677">Repeat</keyword>
<keyword id="KW-0804">Transcription</keyword>
<keyword id="KW-0805">Transcription regulation</keyword>
<keyword id="KW-0862">Zinc</keyword>
<keyword id="KW-0863">Zinc-finger</keyword>
<accession>F4K3G5</accession>
<accession>Q9FJ71</accession>
<organism>
    <name type="scientific">Arabidopsis thaliana</name>
    <name type="common">Mouse-ear cress</name>
    <dbReference type="NCBI Taxonomy" id="3702"/>
    <lineage>
        <taxon>Eukaryota</taxon>
        <taxon>Viridiplantae</taxon>
        <taxon>Streptophyta</taxon>
        <taxon>Embryophyta</taxon>
        <taxon>Tracheophyta</taxon>
        <taxon>Spermatophyta</taxon>
        <taxon>Magnoliopsida</taxon>
        <taxon>eudicotyledons</taxon>
        <taxon>Gunneridae</taxon>
        <taxon>Pentapetalae</taxon>
        <taxon>rosids</taxon>
        <taxon>malvids</taxon>
        <taxon>Brassicales</taxon>
        <taxon>Brassicaceae</taxon>
        <taxon>Camelineae</taxon>
        <taxon>Arabidopsis</taxon>
    </lineage>
</organism>
<sequence length="1297" mass="146788">MTFVDDDEEEDFSVPQSASNYYFEDDDKEPVSFARLPIQWSVEEKVDGSGLGFYLRGRSDNGLLPLHKLVKAWRYDLSNFQPEISVLTKDNIWIKLEEPRKSYGELIRTVLVTLHSIQFLRRNPQASEKALWEKLTRSLRSYDVKPSQNDLVDHIGLIAEAAKRDRNLANSKFILAFLTKKPTKRRLPDEDNAKDDFIVGDEDTYVASDEDELDDEDDDFFESVCAICDNGGEILCCEGSCLRSFHATKKDGEDSLCDSLGFNKMQVEAIQKYFCPNCEHKIHQCFICKNLGSSDNSSGAAEVFQCVSATCGYFYHPHCVTRRLRLGNKEESEALERQIIAGEYTCPLHKCSVCENGEVKTDSNLQFAVCRRCPKSYHRKCLPREISFEDIEDEDILTRAWDGLLHNRVLIYCQEHEIDEELLTPVRDHVKFPFTEEQKVFVKEQRRILESHVGRDKARLKVKDPALQDTCGKASKNSFRSSFPSSKDGFSTKKHGLVSSVPDHSRKRKDIDPSIKHKMVPQKSQKMMEDSREAGKNKLGVKEARDAGKSKISLGERLFSYTQEPNPVKPGRVIPVDSKHNKTDSIASKEPGSEIPTLDNDSQRRLLAVMKKATEEITMGTILKKFKIQSTMSTHSTRNVVDKTITMGKVEGSVQAIRTALKKLEEGGNIEDAKAVCEPEVLSQILKWKDKLKVYLAPFLHGARYTSFGRHFTNPEKLQQIVDRLHWYADDGDMIVDFCCGSNDFSCLMNAKLEETGKKCLYKNYDLFPAKNNFNFERKDWMTVSKDELEPGSKLIMGLNPPFGVNASLANKFITKALEFRPKILILIVPPETERLDKKKSSYVLIWEDKTFLSGNSFYLPGSVNEEDKQLEDWNLVPPPLSLWSRSDFAAKHKKIAEKHCHLSRDVGSSKLKIVEEEANASLHPLGASDGMCDDIPMEKDELEVAECVNKILVSEKIDTVETVARVHQSDHLSRRSQLKKEGKTKDYSGRKLGKSMDSNNVDWKSNDMEEDQGELSRAPESIKVKIPEMTSDWQSPVRSSPDDIYAVCTSISTTTPQRSHEAVEASLPAITRTKSNLGKNIREHGCKVQGTGKPEVSRDRPSSVRTSREDIYTVRPSPENTGQKPFEAFEPSYGASLSHFDDGLAAKYGGFGGGYRMPDPPFLPDQFPLRNGPNEMFDFRGYSDLDRGIGQREYPQQYGGHLDPMLAPPPPPNLMDNAFPLQQRYAPHFDQMNYQRMSSFPPQPPLQPSGHNLLNPHDFPLPPPPPSDFEMSPRGFAPGPNPNYPYMSRSGGWIND</sequence>
<feature type="chain" id="PRO_0000431790" description="Protein ENHANCED DOWNY MILDEW 2">
    <location>
        <begin position="1"/>
        <end position="1297"/>
    </location>
</feature>
<feature type="zinc finger region" description="PHD-type 1; degenerate" evidence="1">
    <location>
        <begin position="222"/>
        <end position="281"/>
    </location>
</feature>
<feature type="zinc finger region" description="PHD-type 2; atypical" evidence="1">
    <location>
        <begin position="282"/>
        <end position="352"/>
    </location>
</feature>
<feature type="zinc finger region" description="PHD-type 3; degenerate" evidence="1">
    <location>
        <begin position="351"/>
        <end position="417"/>
    </location>
</feature>
<feature type="region of interest" description="Disordered" evidence="3">
    <location>
        <begin position="471"/>
        <end position="547"/>
    </location>
</feature>
<feature type="region of interest" description="Disordered" evidence="3">
    <location>
        <begin position="562"/>
        <end position="598"/>
    </location>
</feature>
<feature type="region of interest" description="Disordered" evidence="3">
    <location>
        <begin position="969"/>
        <end position="1017"/>
    </location>
</feature>
<feature type="region of interest" description="Disordered" evidence="3">
    <location>
        <begin position="1085"/>
        <end position="1109"/>
    </location>
</feature>
<feature type="region of interest" description="Disordered" evidence="3">
    <location>
        <begin position="1260"/>
        <end position="1297"/>
    </location>
</feature>
<feature type="short sequence motif" description="Nuclear localization signal 1" evidence="2">
    <location>
        <begin position="445"/>
        <end position="452"/>
    </location>
</feature>
<feature type="short sequence motif" description="Nuclear localization signal 2" evidence="2">
    <location>
        <begin position="492"/>
        <end position="499"/>
    </location>
</feature>
<feature type="short sequence motif" description="Nuclear localization signal 3" evidence="2">
    <location>
        <begin position="610"/>
        <end position="617"/>
    </location>
</feature>
<feature type="short sequence motif" description="Nuclear localization signal 4" evidence="2">
    <location>
        <begin position="979"/>
        <end position="986"/>
    </location>
</feature>
<feature type="compositionally biased region" description="Low complexity" evidence="3">
    <location>
        <begin position="475"/>
        <end position="487"/>
    </location>
</feature>
<feature type="compositionally biased region" description="Basic and acidic residues" evidence="3">
    <location>
        <begin position="526"/>
        <end position="547"/>
    </location>
</feature>
<feature type="compositionally biased region" description="Basic and acidic residues" evidence="3">
    <location>
        <begin position="969"/>
        <end position="990"/>
    </location>
</feature>
<feature type="compositionally biased region" description="Basic and acidic residues" evidence="3">
    <location>
        <begin position="1096"/>
        <end position="1109"/>
    </location>
</feature>
<feature type="binding site" evidence="1">
    <location>
        <position position="237"/>
    </location>
    <ligand>
        <name>Zn(2+)</name>
        <dbReference type="ChEBI" id="CHEBI:29105"/>
        <label>1</label>
    </ligand>
</feature>
<feature type="binding site" evidence="1">
    <location>
        <position position="241"/>
    </location>
    <ligand>
        <name>Zn(2+)</name>
        <dbReference type="ChEBI" id="CHEBI:29105"/>
        <label>1</label>
    </ligand>
</feature>
<feature type="binding site" evidence="1">
    <location>
        <position position="275"/>
    </location>
    <ligand>
        <name>Zn(2+)</name>
        <dbReference type="ChEBI" id="CHEBI:29105"/>
        <label>1</label>
    </ligand>
</feature>
<feature type="binding site" evidence="1">
    <location>
        <position position="278"/>
    </location>
    <ligand>
        <name>Zn(2+)</name>
        <dbReference type="ChEBI" id="CHEBI:29105"/>
        <label>1</label>
    </ligand>
</feature>
<feature type="binding site" evidence="1">
    <location>
        <position position="285"/>
    </location>
    <ligand>
        <name>Zn(2+)</name>
        <dbReference type="ChEBI" id="CHEBI:29105"/>
        <label>2</label>
    </ligand>
</feature>
<feature type="binding site" evidence="1">
    <location>
        <position position="288"/>
    </location>
    <ligand>
        <name>Zn(2+)</name>
        <dbReference type="ChEBI" id="CHEBI:29105"/>
        <label>2</label>
    </ligand>
</feature>
<feature type="binding site" evidence="1">
    <location>
        <position position="306"/>
    </location>
    <ligand>
        <name>Zn(2+)</name>
        <dbReference type="ChEBI" id="CHEBI:29105"/>
        <label>3</label>
    </ligand>
</feature>
<feature type="binding site" evidence="1">
    <location>
        <position position="311"/>
    </location>
    <ligand>
        <name>Zn(2+)</name>
        <dbReference type="ChEBI" id="CHEBI:29105"/>
        <label>3</label>
    </ligand>
</feature>
<feature type="binding site" evidence="1">
    <location>
        <position position="316"/>
    </location>
    <ligand>
        <name>Zn(2+)</name>
        <dbReference type="ChEBI" id="CHEBI:29105"/>
        <label>2</label>
    </ligand>
</feature>
<feature type="binding site" evidence="1">
    <location>
        <position position="319"/>
    </location>
    <ligand>
        <name>Zn(2+)</name>
        <dbReference type="ChEBI" id="CHEBI:29105"/>
        <label>2</label>
    </ligand>
</feature>
<feature type="binding site" evidence="1">
    <location>
        <position position="346"/>
    </location>
    <ligand>
        <name>Zn(2+)</name>
        <dbReference type="ChEBI" id="CHEBI:29105"/>
        <label>3</label>
    </ligand>
</feature>
<feature type="binding site" evidence="1">
    <location>
        <position position="349"/>
    </location>
    <ligand>
        <name>Zn(2+)</name>
        <dbReference type="ChEBI" id="CHEBI:29105"/>
        <label>3</label>
    </ligand>
</feature>
<evidence type="ECO:0000255" key="1">
    <source>
        <dbReference type="PROSITE-ProRule" id="PRU00146"/>
    </source>
</evidence>
<evidence type="ECO:0000255" key="2">
    <source>
        <dbReference type="PROSITE-ProRule" id="PRU00768"/>
    </source>
</evidence>
<evidence type="ECO:0000256" key="3">
    <source>
        <dbReference type="SAM" id="MobiDB-lite"/>
    </source>
</evidence>
<evidence type="ECO:0000269" key="4">
    <source>
    </source>
</evidence>
<evidence type="ECO:0000269" key="5">
    <source>
    </source>
</evidence>
<evidence type="ECO:0000269" key="6">
    <source>
    </source>
</evidence>
<evidence type="ECO:0000269" key="7">
    <source>
    </source>
</evidence>
<evidence type="ECO:0000269" key="8">
    <source>
    </source>
</evidence>
<evidence type="ECO:0000269" key="9">
    <source>
    </source>
</evidence>
<evidence type="ECO:0000269" key="10">
    <source>
    </source>
</evidence>
<evidence type="ECO:0000269" key="11">
    <source>
    </source>
</evidence>
<evidence type="ECO:0000269" key="12">
    <source>
    </source>
</evidence>
<evidence type="ECO:0000269" key="13">
    <source>
    </source>
</evidence>
<evidence type="ECO:0000269" key="14">
    <source>
    </source>
</evidence>
<evidence type="ECO:0000269" key="15">
    <source>
    </source>
</evidence>
<evidence type="ECO:0000269" key="16">
    <source>
    </source>
</evidence>
<evidence type="ECO:0000269" key="17">
    <source>
    </source>
</evidence>
<evidence type="ECO:0000303" key="18">
    <source>
    </source>
</evidence>
<evidence type="ECO:0000305" key="19"/>
<evidence type="ECO:0000312" key="20">
    <source>
        <dbReference type="Araport" id="AT5G55390"/>
    </source>
</evidence>
<evidence type="ECO:0000312" key="21">
    <source>
        <dbReference type="EMBL" id="BAB08556.1"/>
    </source>
</evidence>
<protein>
    <recommendedName>
        <fullName evidence="18">Protein ENHANCED DOWNY MILDEW 2</fullName>
    </recommendedName>
</protein>
<proteinExistence type="evidence at protein level"/>